<evidence type="ECO:0000255" key="1"/>
<evidence type="ECO:0000255" key="2">
    <source>
        <dbReference type="PROSITE-ProRule" id="PRU01118"/>
    </source>
</evidence>
<evidence type="ECO:0000256" key="3">
    <source>
        <dbReference type="SAM" id="MobiDB-lite"/>
    </source>
</evidence>
<evidence type="ECO:0000269" key="4">
    <source>
    </source>
</evidence>
<evidence type="ECO:0000303" key="5">
    <source>
    </source>
</evidence>
<evidence type="ECO:0000305" key="6"/>
<evidence type="ECO:0000305" key="7">
    <source>
    </source>
</evidence>
<protein>
    <recommendedName>
        <fullName evidence="5">Secreted LysM effector LysM9</fullName>
    </recommendedName>
    <alternativeName>
        <fullName evidence="5">LysM domain-containing protein 9</fullName>
    </alternativeName>
</protein>
<reference key="1">
    <citation type="journal article" date="2015" name="Mol. Plant Microbe Interact.">
        <title>Genome, transcriptome, and functional analyses of Penicillium expansum provide new insights into secondary metabolism and pathogenicity.</title>
        <authorList>
            <person name="Ballester A.R."/>
            <person name="Marcet-Houben M."/>
            <person name="Levin E."/>
            <person name="Sela N."/>
            <person name="Selma-Lazaro C."/>
            <person name="Carmona L."/>
            <person name="Wisniewski M."/>
            <person name="Droby S."/>
            <person name="Gonzalez-Candelas L."/>
            <person name="Gabaldon T."/>
        </authorList>
    </citation>
    <scope>NUCLEOTIDE SEQUENCE [LARGE SCALE GENOMIC DNA]</scope>
    <source>
        <strain>MD-8</strain>
    </source>
</reference>
<reference key="2">
    <citation type="journal article" date="2020" name="Mol. Genet. Genomics">
        <title>Multiple transcriptomic analyses and characterization of pathogen-related core effectors and LysM family members reveal their differential roles in fungal growth and pathogenicity in Penicillium expansum.</title>
        <authorList>
            <person name="Chen D."/>
            <person name="Li G."/>
            <person name="Liu J."/>
            <person name="Wisniewski M."/>
            <person name="Droby S."/>
            <person name="Levin E."/>
            <person name="Huang S."/>
            <person name="Liu Y."/>
        </authorList>
    </citation>
    <scope>FUNCTION</scope>
    <scope>DISRUPTION PHENOTYPE</scope>
    <scope>DOMAIN</scope>
</reference>
<feature type="signal peptide" evidence="1">
    <location>
        <begin position="1"/>
        <end position="25"/>
    </location>
</feature>
<feature type="chain" id="PRO_5009752627" description="Secreted LysM effector LysM9">
    <location>
        <begin position="26"/>
        <end position="376"/>
    </location>
</feature>
<feature type="domain" description="LysM" evidence="2">
    <location>
        <begin position="41"/>
        <end position="89"/>
    </location>
</feature>
<feature type="region of interest" description="Disordered" evidence="3">
    <location>
        <begin position="190"/>
        <end position="219"/>
    </location>
</feature>
<keyword id="KW-0147">Chitin-binding</keyword>
<keyword id="KW-1185">Reference proteome</keyword>
<keyword id="KW-0964">Secreted</keyword>
<keyword id="KW-0732">Signal</keyword>
<keyword id="KW-0843">Virulence</keyword>
<dbReference type="EMBL" id="JQFZ01000316">
    <property type="protein sequence ID" value="KGO50900.1"/>
    <property type="molecule type" value="Genomic_DNA"/>
</dbReference>
<dbReference type="RefSeq" id="XP_016593931.1">
    <property type="nucleotide sequence ID" value="XM_016746827.1"/>
</dbReference>
<dbReference type="SMR" id="A0A0A2JH00"/>
<dbReference type="STRING" id="27334.A0A0A2JH00"/>
<dbReference type="GeneID" id="27682247"/>
<dbReference type="VEuPathDB" id="FungiDB:PEXP_102470"/>
<dbReference type="HOGENOM" id="CLU_037347_0_0_1"/>
<dbReference type="OrthoDB" id="73875at2759"/>
<dbReference type="PhylomeDB" id="A0A0A2JH00"/>
<dbReference type="Proteomes" id="UP000030143">
    <property type="component" value="Unassembled WGS sequence"/>
</dbReference>
<dbReference type="GO" id="GO:0005576">
    <property type="term" value="C:extracellular region"/>
    <property type="evidence" value="ECO:0007669"/>
    <property type="project" value="UniProtKB-SubCell"/>
</dbReference>
<dbReference type="GO" id="GO:0008061">
    <property type="term" value="F:chitin binding"/>
    <property type="evidence" value="ECO:0007669"/>
    <property type="project" value="UniProtKB-KW"/>
</dbReference>
<dbReference type="CDD" id="cd00035">
    <property type="entry name" value="ChtBD1"/>
    <property type="match status" value="1"/>
</dbReference>
<dbReference type="CDD" id="cd00118">
    <property type="entry name" value="LysM"/>
    <property type="match status" value="1"/>
</dbReference>
<dbReference type="Gene3D" id="3.30.60.10">
    <property type="entry name" value="Endochitinase-like"/>
    <property type="match status" value="1"/>
</dbReference>
<dbReference type="Gene3D" id="3.10.350.10">
    <property type="entry name" value="LysM domain"/>
    <property type="match status" value="1"/>
</dbReference>
<dbReference type="InterPro" id="IPR001002">
    <property type="entry name" value="Chitin-bd_1"/>
</dbReference>
<dbReference type="InterPro" id="IPR018371">
    <property type="entry name" value="Chitin-binding_1_CS"/>
</dbReference>
<dbReference type="InterPro" id="IPR036861">
    <property type="entry name" value="Endochitinase-like_sf"/>
</dbReference>
<dbReference type="InterPro" id="IPR053214">
    <property type="entry name" value="LysM12-like"/>
</dbReference>
<dbReference type="InterPro" id="IPR018392">
    <property type="entry name" value="LysM_dom"/>
</dbReference>
<dbReference type="InterPro" id="IPR036779">
    <property type="entry name" value="LysM_dom_sf"/>
</dbReference>
<dbReference type="PANTHER" id="PTHR47700:SF2">
    <property type="entry name" value="CHITINASE"/>
    <property type="match status" value="1"/>
</dbReference>
<dbReference type="PANTHER" id="PTHR47700">
    <property type="entry name" value="V CHITINASE, PUTATIVE (AFU_ORTHOLOGUE AFUA_6G13720)-RELATED"/>
    <property type="match status" value="1"/>
</dbReference>
<dbReference type="Pfam" id="PF00187">
    <property type="entry name" value="Chitin_bind_1"/>
    <property type="match status" value="1"/>
</dbReference>
<dbReference type="Pfam" id="PF01476">
    <property type="entry name" value="LysM"/>
    <property type="match status" value="1"/>
</dbReference>
<dbReference type="Pfam" id="PF25139">
    <property type="entry name" value="LysM14_C"/>
    <property type="match status" value="1"/>
</dbReference>
<dbReference type="SMART" id="SM00257">
    <property type="entry name" value="LysM"/>
    <property type="match status" value="1"/>
</dbReference>
<dbReference type="SUPFAM" id="SSF54106">
    <property type="entry name" value="LysM domain"/>
    <property type="match status" value="1"/>
</dbReference>
<dbReference type="SUPFAM" id="SSF57016">
    <property type="entry name" value="Plant lectins/antimicrobial peptides"/>
    <property type="match status" value="1"/>
</dbReference>
<dbReference type="PROSITE" id="PS00026">
    <property type="entry name" value="CHIT_BIND_I_1"/>
    <property type="match status" value="1"/>
</dbReference>
<dbReference type="PROSITE" id="PS51782">
    <property type="entry name" value="LYSM"/>
    <property type="match status" value="1"/>
</dbReference>
<organism>
    <name type="scientific">Penicillium expansum</name>
    <name type="common">Blue mold rot fungus</name>
    <dbReference type="NCBI Taxonomy" id="27334"/>
    <lineage>
        <taxon>Eukaryota</taxon>
        <taxon>Fungi</taxon>
        <taxon>Dikarya</taxon>
        <taxon>Ascomycota</taxon>
        <taxon>Pezizomycotina</taxon>
        <taxon>Eurotiomycetes</taxon>
        <taxon>Eurotiomycetidae</taxon>
        <taxon>Eurotiales</taxon>
        <taxon>Aspergillaceae</taxon>
        <taxon>Penicillium</taxon>
    </lineage>
</organism>
<name>LYSM9_PENEN</name>
<comment type="function">
    <text evidence="7">Secreted LysM effector that might have a role in sequestration of chitin oligosaccharides (breakdown products of fungal cell walls that are released during invasion and act as triggers of host immunity) to dampen host defense.</text>
</comment>
<comment type="subcellular location">
    <subcellularLocation>
        <location evidence="7">Secreted</location>
    </subcellularLocation>
</comment>
<comment type="domain">
    <text evidence="7">The LysM (lysin motif) domains are small globular domains involved in binding chitin in eukaryotes. LysM9 contains one LysM domain.</text>
</comment>
<comment type="disruption phenotype">
    <text evidence="4">Leads to enhanced fungal virulence, with faster decaying on infected fruits.</text>
</comment>
<comment type="miscellaneous">
    <text evidence="6">In plants, chitin acts as a microbe-associated molecular pattern (MAMP) that is recognized by lysin motif (LysM)-containing plant cell surface-localized pattern recognition receptors (PRRs) that activate a plethora of downstream immune responses.</text>
</comment>
<comment type="similarity">
    <text evidence="6">Belongs to the secreted LysM effector family.</text>
</comment>
<accession>A0A0A2JH00</accession>
<proteinExistence type="inferred from homology"/>
<sequence>MGHFHLSNFIALIGILLVGPTATSGAAVSVVSQADSNDICSKYVVQAGETCSAIAQAHSITTADIETYNAQSWAWTGCGQISQGDFICLSSGESPMPVALPHAVCGPQVPGTARPNTWSKLGSLNPCPANQCCSSSGLCGTTPDFCTSAAHVPVALSMSTDTQPNQLTTTSQAITISTSPAIPLQKVVTSSETSSSMTTSTSATTSVPTTTSTTTTTKTTSTLKTTTTSTISSQTKTKTSTSTSTTKPKIVKPWSLTMYTKQDCKGDYYVLQGHNKGYSDTCLNLHGGLSSKDTDTGVSCKWFTNDGKSSTKCDSGALTRPQSWIVETGICTVFSVKDCKHDLHSNAYTPVPKHPCQNRGKFDTPYFVSMNCYTEG</sequence>
<gene>
    <name evidence="5" type="primary">LysM9</name>
    <name type="ORF">PEX2_095570</name>
</gene>